<feature type="chain" id="PRO_0000085720" description="Cyclin-dependent kinase 1">
    <location>
        <begin position="1"/>
        <end position="297"/>
    </location>
</feature>
<feature type="domain" description="Protein kinase" evidence="5">
    <location>
        <begin position="4"/>
        <end position="293"/>
    </location>
</feature>
<feature type="active site" description="Proton acceptor" evidence="5 6">
    <location>
        <position position="134"/>
    </location>
</feature>
<feature type="binding site" evidence="5">
    <location>
        <begin position="10"/>
        <end position="18"/>
    </location>
    <ligand>
        <name>ATP</name>
        <dbReference type="ChEBI" id="CHEBI:30616"/>
    </ligand>
</feature>
<feature type="binding site" evidence="5">
    <location>
        <position position="33"/>
    </location>
    <ligand>
        <name>ATP</name>
        <dbReference type="ChEBI" id="CHEBI:30616"/>
    </ligand>
</feature>
<feature type="modified residue" description="Phosphothreonine" evidence="1">
    <location>
        <position position="14"/>
    </location>
</feature>
<feature type="modified residue" description="Phosphotyrosine" evidence="13 16">
    <location>
        <position position="15"/>
    </location>
</feature>
<feature type="modified residue" description="Phosphothreonine" evidence="13">
    <location>
        <position position="167"/>
    </location>
</feature>
<feature type="mutagenesis site" description="Premature entry into mitosis." evidence="23">
    <original>Y</original>
    <variation>F</variation>
    <location>
        <position position="15"/>
    </location>
</feature>
<feature type="mutagenesis site" description="In cdc2-4W." evidence="19">
    <original>C</original>
    <variation>F</variation>
    <location>
        <position position="67"/>
    </location>
</feature>
<feature type="mutagenesis site" description="In cdc2-3W." evidence="19">
    <original>C</original>
    <variation>Y</variation>
    <location>
        <position position="67"/>
    </location>
</feature>
<feature type="mutagenesis site" description="Arrests in G1 or G2 at high temperature." evidence="14">
    <original>F</original>
    <variation>L</variation>
    <location>
        <position position="210"/>
    </location>
</feature>
<feature type="mutagenesis site" description="Arrests in G2 at high temperature." evidence="14">
    <original>G</original>
    <variation>S</variation>
    <location>
        <position position="212"/>
    </location>
</feature>
<feature type="mutagenesis site" description="Arrests in G2 at high temperature." evidence="14">
    <original>L</original>
    <variation>S</variation>
    <location>
        <position position="269"/>
    </location>
</feature>
<feature type="mutagenesis site" description="Arrests in G1 or G2 at high temperature." evidence="14">
    <original>Y</original>
    <variation>H</variation>
    <location>
        <position position="292"/>
    </location>
</feature>
<name>CDK1_SCHPO</name>
<reference key="1">
    <citation type="journal article" date="1984" name="Gene">
        <title>Sequence of the cell division gene CDC2 from Schizosaccharomyces pombe; patterns of splicing and homology to protein kinases.</title>
        <authorList>
            <person name="Hindley J."/>
            <person name="Phear G.A."/>
        </authorList>
    </citation>
    <scope>NUCLEOTIDE SEQUENCE [GENOMIC DNA]</scope>
    <scope>MUTAGENESIS OF CYS-67</scope>
</reference>
<reference key="2">
    <citation type="journal article" date="2000" name="Yeast">
        <title>A 38 kb segment containing the cdc2 gene from the left arm of fission yeast chromosome II: sequence analysis and characterization of the genomic DNA and cDNAs encoded on the segment.</title>
        <authorList>
            <person name="Machida M."/>
            <person name="Yamazaki S."/>
            <person name="Kunihiro S."/>
            <person name="Tanaka T."/>
            <person name="Kushida N."/>
            <person name="Jinno K."/>
            <person name="Haikawa Y."/>
            <person name="Yamazaki J."/>
            <person name="Yamamoto S."/>
            <person name="Sekine M."/>
            <person name="Oguchi A."/>
            <person name="Nagai Y."/>
            <person name="Sakai M."/>
            <person name="Aoki K."/>
            <person name="Ogura K."/>
            <person name="Kudoh Y."/>
            <person name="Kikuchi H."/>
            <person name="Zhang M.Q."/>
            <person name="Yanagida M."/>
        </authorList>
    </citation>
    <scope>NUCLEOTIDE SEQUENCE [LARGE SCALE GENOMIC DNA]</scope>
    <source>
        <strain>972 / ATCC 24843</strain>
    </source>
</reference>
<reference key="3">
    <citation type="journal article" date="2002" name="Nature">
        <title>The genome sequence of Schizosaccharomyces pombe.</title>
        <authorList>
            <person name="Wood V."/>
            <person name="Gwilliam R."/>
            <person name="Rajandream M.A."/>
            <person name="Lyne M.H."/>
            <person name="Lyne R."/>
            <person name="Stewart A."/>
            <person name="Sgouros J.G."/>
            <person name="Peat N."/>
            <person name="Hayles J."/>
            <person name="Baker S.G."/>
            <person name="Basham D."/>
            <person name="Bowman S."/>
            <person name="Brooks K."/>
            <person name="Brown D."/>
            <person name="Brown S."/>
            <person name="Chillingworth T."/>
            <person name="Churcher C.M."/>
            <person name="Collins M."/>
            <person name="Connor R."/>
            <person name="Cronin A."/>
            <person name="Davis P."/>
            <person name="Feltwell T."/>
            <person name="Fraser A."/>
            <person name="Gentles S."/>
            <person name="Goble A."/>
            <person name="Hamlin N."/>
            <person name="Harris D.E."/>
            <person name="Hidalgo J."/>
            <person name="Hodgson G."/>
            <person name="Holroyd S."/>
            <person name="Hornsby T."/>
            <person name="Howarth S."/>
            <person name="Huckle E.J."/>
            <person name="Hunt S."/>
            <person name="Jagels K."/>
            <person name="James K.D."/>
            <person name="Jones L."/>
            <person name="Jones M."/>
            <person name="Leather S."/>
            <person name="McDonald S."/>
            <person name="McLean J."/>
            <person name="Mooney P."/>
            <person name="Moule S."/>
            <person name="Mungall K.L."/>
            <person name="Murphy L.D."/>
            <person name="Niblett D."/>
            <person name="Odell C."/>
            <person name="Oliver K."/>
            <person name="O'Neil S."/>
            <person name="Pearson D."/>
            <person name="Quail M.A."/>
            <person name="Rabbinowitsch E."/>
            <person name="Rutherford K.M."/>
            <person name="Rutter S."/>
            <person name="Saunders D."/>
            <person name="Seeger K."/>
            <person name="Sharp S."/>
            <person name="Skelton J."/>
            <person name="Simmonds M.N."/>
            <person name="Squares R."/>
            <person name="Squares S."/>
            <person name="Stevens K."/>
            <person name="Taylor K."/>
            <person name="Taylor R.G."/>
            <person name="Tivey A."/>
            <person name="Walsh S.V."/>
            <person name="Warren T."/>
            <person name="Whitehead S."/>
            <person name="Woodward J.R."/>
            <person name="Volckaert G."/>
            <person name="Aert R."/>
            <person name="Robben J."/>
            <person name="Grymonprez B."/>
            <person name="Weltjens I."/>
            <person name="Vanstreels E."/>
            <person name="Rieger M."/>
            <person name="Schaefer M."/>
            <person name="Mueller-Auer S."/>
            <person name="Gabel C."/>
            <person name="Fuchs M."/>
            <person name="Duesterhoeft A."/>
            <person name="Fritzc C."/>
            <person name="Holzer E."/>
            <person name="Moestl D."/>
            <person name="Hilbert H."/>
            <person name="Borzym K."/>
            <person name="Langer I."/>
            <person name="Beck A."/>
            <person name="Lehrach H."/>
            <person name="Reinhardt R."/>
            <person name="Pohl T.M."/>
            <person name="Eger P."/>
            <person name="Zimmermann W."/>
            <person name="Wedler H."/>
            <person name="Wambutt R."/>
            <person name="Purnelle B."/>
            <person name="Goffeau A."/>
            <person name="Cadieu E."/>
            <person name="Dreano S."/>
            <person name="Gloux S."/>
            <person name="Lelaure V."/>
            <person name="Mottier S."/>
            <person name="Galibert F."/>
            <person name="Aves S.J."/>
            <person name="Xiang Z."/>
            <person name="Hunt C."/>
            <person name="Moore K."/>
            <person name="Hurst S.M."/>
            <person name="Lucas M."/>
            <person name="Rochet M."/>
            <person name="Gaillardin C."/>
            <person name="Tallada V.A."/>
            <person name="Garzon A."/>
            <person name="Thode G."/>
            <person name="Daga R.R."/>
            <person name="Cruzado L."/>
            <person name="Jimenez J."/>
            <person name="Sanchez M."/>
            <person name="del Rey F."/>
            <person name="Benito J."/>
            <person name="Dominguez A."/>
            <person name="Revuelta J.L."/>
            <person name="Moreno S."/>
            <person name="Armstrong J."/>
            <person name="Forsburg S.L."/>
            <person name="Cerutti L."/>
            <person name="Lowe T."/>
            <person name="McCombie W.R."/>
            <person name="Paulsen I."/>
            <person name="Potashkin J."/>
            <person name="Shpakovski G.V."/>
            <person name="Ussery D."/>
            <person name="Barrell B.G."/>
            <person name="Nurse P."/>
        </authorList>
    </citation>
    <scope>NUCLEOTIDE SEQUENCE [LARGE SCALE GENOMIC DNA]</scope>
    <source>
        <strain>972 / ATCC 24843</strain>
    </source>
</reference>
<reference key="4">
    <citation type="journal article" date="1984" name="J. Bacteriol.">
        <title>A meiotic mutant of the fission yeast Schizosaccharomyces pombe that produces mature asci containing two diploid spores.</title>
        <authorList>
            <person name="Nakaseko Y."/>
            <person name="Niwa O."/>
            <person name="Yanagida M."/>
        </authorList>
    </citation>
    <scope>FUNCTION</scope>
</reference>
<reference key="5">
    <citation type="journal article" date="1987" name="EMBO J.">
        <title>p13suc1 acts in the fission yeast cell division cycle as a component of the p34cdc2 protein kinase.</title>
        <authorList>
            <person name="Brizuela L."/>
            <person name="Draetta G."/>
            <person name="Beach D."/>
        </authorList>
    </citation>
    <scope>ASSOCIATION WITH SUC1</scope>
</reference>
<reference key="6">
    <citation type="journal article" date="1989" name="Curr. Genet.">
        <title>Initiation of the second meiotic division in Schizosaccharomyces pombe shares common functions with that of mitosis.</title>
        <authorList>
            <person name="Grallert B."/>
            <person name="Sipiczki M."/>
        </authorList>
    </citation>
    <scope>FUNCTION</scope>
</reference>
<reference key="7">
    <citation type="journal article" date="1989" name="Nature">
        <title>Tyrosine phosphorylation of the fission yeast cdc2+ protein kinase regulates entry into mitosis.</title>
        <authorList>
            <person name="Gould K.L."/>
            <person name="Nurse P."/>
        </authorList>
    </citation>
    <scope>PHOSPHORYLATION AT TYR-15</scope>
</reference>
<reference key="8">
    <citation type="journal article" date="1990" name="Mol. Gen. Genet.">
        <title>Dissociation of meiotic and mitotic roles of the fission yeast cdc2 gene.</title>
        <authorList>
            <person name="Grallert B."/>
            <person name="Sipiczki M."/>
        </authorList>
    </citation>
    <scope>FUNCTION</scope>
</reference>
<reference key="9">
    <citation type="journal article" date="1991" name="Mol. Gen. Genet.">
        <title>Isolation, characterisation and molecular cloning of new mutant alleles of the fission yeast p34cdc2+ protein kinase gene: identification of temperature-sensitive G2-arresting alleles.</title>
        <authorList>
            <person name="MacNeill S.A."/>
            <person name="Creanor J."/>
            <person name="Nurse P."/>
        </authorList>
    </citation>
    <scope>FUNCTION</scope>
    <scope>MUTAGENESIS OF PHE-210; GLY-212; LEU-269 AND TYR-292</scope>
</reference>
<reference key="10">
    <citation type="journal article" date="1993" name="Mol. Cell. Biol.">
        <title>Two fission yeast B-type cyclins, cig2 and Cdc13, have different functions in mitosis.</title>
        <authorList>
            <person name="Bueno A."/>
            <person name="Russell P."/>
        </authorList>
    </citation>
    <scope>INTERACTION WITH CIG2</scope>
</reference>
<reference key="11">
    <citation type="journal article" date="1993" name="Mol. Gen. Genet.">
        <title>Mutational analysis of the fission yeast p34cdc2 protein kinase gene.</title>
        <authorList>
            <person name="McNeill S.A."/>
            <person name="Nurse P."/>
        </authorList>
    </citation>
    <scope>MUTAGENESIS OF TYR-15</scope>
</reference>
<reference key="12">
    <citation type="journal article" date="1994" name="Cell">
        <title>Temporal order of S phase and mitosis in fission yeast is determined by the state of the p34cdc2-mitotic B cyclin complex.</title>
        <authorList>
            <person name="Hayles J."/>
            <person name="Fisher D."/>
            <person name="Woollard A."/>
            <person name="Nurse P."/>
        </authorList>
    </citation>
    <scope>FUNCTION</scope>
</reference>
<reference key="13">
    <citation type="journal article" date="1995" name="Genetics">
        <title>The role of cdc2 and other genes in meiosis in Schizosaccharomyces pombe.</title>
        <authorList>
            <person name="Iino Y."/>
            <person name="Hiramine Y."/>
            <person name="Yamamoto M."/>
        </authorList>
    </citation>
    <scope>FUNCTION</scope>
</reference>
<reference key="14">
    <citation type="journal article" date="1996" name="Trends Genet.">
        <title>A quantitative model for the cdc2 control of S phase and mitosis in fission yeast.</title>
        <authorList>
            <person name="Stern B."/>
            <person name="Nurse P."/>
        </authorList>
    </citation>
    <scope>REVIEW</scope>
</reference>
<reference key="15">
    <citation type="journal article" date="1997" name="Genes Dev.">
        <title>Cdc2 tyrosine phosphorylation is required for the DNA damage checkpoint in fission yeast.</title>
        <authorList>
            <person name="Rhind N."/>
            <person name="Furnari B."/>
            <person name="Russell P."/>
        </authorList>
    </citation>
    <scope>FUNCTION</scope>
</reference>
<reference key="16">
    <citation type="journal article" date="2000" name="Mol. Cell">
        <title>The spike of S phase cyclin Cig2 expression at the G1-S border in fission yeast requires both APC and SCF ubiquitin ligases.</title>
        <authorList>
            <person name="Yamano H."/>
            <person name="Kitamura K."/>
            <person name="Kominami K."/>
            <person name="Lehmann A."/>
            <person name="Hunt T."/>
            <person name="Toda T."/>
        </authorList>
    </citation>
    <scope>INTERACTION WITH CIG2</scope>
</reference>
<reference key="17">
    <citation type="journal article" date="2001" name="Mol. Cell. Biol.">
        <title>Control of DNA rereplication via Cdc2 phosphorylation sites in the origin recognition complex.</title>
        <authorList>
            <person name="Vas A."/>
            <person name="Mok W."/>
            <person name="Leatherwood J."/>
        </authorList>
    </citation>
    <scope>FUNCTION</scope>
    <scope>CATALYTIC ACTIVITY</scope>
</reference>
<reference key="18">
    <citation type="journal article" date="2005" name="J. Biol. Chem.">
        <title>Regulation of Cdc2p and Cdc13p is required for cell cycle arrest induced by defective RNA splicing in fission yeast.</title>
        <authorList>
            <person name="Shimada M."/>
            <person name="Namikawa-Yamada C."/>
            <person name="Nakanishi M."/>
            <person name="Murakami H."/>
        </authorList>
    </citation>
    <scope>FUNCTION</scope>
</reference>
<reference key="19">
    <citation type="journal article" date="2006" name="Curr. Biol.">
        <title>CDC2 phosphorylation of the fission yeast dis1 ensures accurate chromosome segregation.</title>
        <authorList>
            <person name="Aoki K."/>
            <person name="Nakaseko Y."/>
            <person name="Kinoshita K."/>
            <person name="Goshima G."/>
            <person name="Yanagida M."/>
        </authorList>
    </citation>
    <scope>FUNCTION</scope>
</reference>
<reference key="20">
    <citation type="journal article" date="2006" name="J. Cell Sci.">
        <title>Activity of Cdc2 and its interaction with the cyclin Cdc13 depend on the molecular chaperone Cdc37 in Schizosaccharomyces pombe.</title>
        <authorList>
            <person name="Turnbull E.L."/>
            <person name="Martin I.V."/>
            <person name="Fantes P.A."/>
        </authorList>
    </citation>
    <scope>INTERACTION WITH CDC13 AND CDC37</scope>
</reference>
<reference key="21">
    <citation type="journal article" date="2006" name="Nat. Biotechnol.">
        <title>ORFeome cloning and global analysis of protein localization in the fission yeast Schizosaccharomyces pombe.</title>
        <authorList>
            <person name="Matsuyama A."/>
            <person name="Arai R."/>
            <person name="Yashiroda Y."/>
            <person name="Shirai A."/>
            <person name="Kamata A."/>
            <person name="Sekido S."/>
            <person name="Kobayashi Y."/>
            <person name="Hashimoto A."/>
            <person name="Hamamoto M."/>
            <person name="Hiraoka Y."/>
            <person name="Horinouchi S."/>
            <person name="Yoshida M."/>
        </authorList>
    </citation>
    <scope>SUBCELLULAR LOCATION [LARGE SCALE ANALYSIS]</scope>
</reference>
<reference key="22">
    <citation type="journal article" date="2008" name="J. Proteome Res.">
        <title>Phosphoproteome analysis of fission yeast.</title>
        <authorList>
            <person name="Wilson-Grady J.T."/>
            <person name="Villen J."/>
            <person name="Gygi S.P."/>
        </authorList>
    </citation>
    <scope>FUNCTION</scope>
    <scope>PHOSPHORYLATION [LARGE SCALE ANALYSIS] AT TYR-15 AND THR-167</scope>
    <scope>IDENTIFICATION BY MASS SPECTROMETRY</scope>
</reference>
<reference key="23">
    <citation type="journal article" date="2016" name="Cell">
        <title>CDK Substrate Phosphorylation and Ordering the Cell Cycle.</title>
        <authorList>
            <person name="Swaffer M.P."/>
            <person name="Jones A.W."/>
            <person name="Flynn H.R."/>
            <person name="Snijders A.P."/>
            <person name="Nurse P."/>
        </authorList>
    </citation>
    <scope>FUNCTION</scope>
</reference>
<keyword id="KW-0067">ATP-binding</keyword>
<keyword id="KW-0131">Cell cycle</keyword>
<keyword id="KW-0132">Cell division</keyword>
<keyword id="KW-0963">Cytoplasm</keyword>
<keyword id="KW-0418">Kinase</keyword>
<keyword id="KW-0498">Mitosis</keyword>
<keyword id="KW-0547">Nucleotide-binding</keyword>
<keyword id="KW-0597">Phosphoprotein</keyword>
<keyword id="KW-1185">Reference proteome</keyword>
<keyword id="KW-0723">Serine/threonine-protein kinase</keyword>
<keyword id="KW-0808">Transferase</keyword>
<accession>P04551</accession>
<organism>
    <name type="scientific">Schizosaccharomyces pombe (strain 972 / ATCC 24843)</name>
    <name type="common">Fission yeast</name>
    <dbReference type="NCBI Taxonomy" id="284812"/>
    <lineage>
        <taxon>Eukaryota</taxon>
        <taxon>Fungi</taxon>
        <taxon>Dikarya</taxon>
        <taxon>Ascomycota</taxon>
        <taxon>Taphrinomycotina</taxon>
        <taxon>Schizosaccharomycetes</taxon>
        <taxon>Schizosaccharomycetales</taxon>
        <taxon>Schizosaccharomycetaceae</taxon>
        <taxon>Schizosaccharomyces</taxon>
    </lineage>
</organism>
<dbReference type="EC" id="2.7.11.22" evidence="8"/>
<dbReference type="EMBL" id="M12912">
    <property type="protein sequence ID" value="AAA35293.1"/>
    <property type="molecule type" value="Genomic_DNA"/>
</dbReference>
<dbReference type="EMBL" id="AB004534">
    <property type="protein sequence ID" value="BAA21379.1"/>
    <property type="molecule type" value="Genomic_DNA"/>
</dbReference>
<dbReference type="EMBL" id="CU329671">
    <property type="protein sequence ID" value="CAC37513.1"/>
    <property type="molecule type" value="Genomic_DNA"/>
</dbReference>
<dbReference type="PIR" id="A23359">
    <property type="entry name" value="TVZP2"/>
</dbReference>
<dbReference type="RefSeq" id="NP_595629.1">
    <property type="nucleotide sequence ID" value="NM_001021523.2"/>
</dbReference>
<dbReference type="SMR" id="P04551"/>
<dbReference type="BioGRID" id="276415">
    <property type="interactions" value="105"/>
</dbReference>
<dbReference type="DIP" id="DIP-1076N"/>
<dbReference type="FunCoup" id="P04551">
    <property type="interactions" value="873"/>
</dbReference>
<dbReference type="IntAct" id="P04551">
    <property type="interactions" value="6"/>
</dbReference>
<dbReference type="STRING" id="284812.P04551"/>
<dbReference type="iPTMnet" id="P04551"/>
<dbReference type="PaxDb" id="4896-SPBC11B10.09.1"/>
<dbReference type="EnsemblFungi" id="SPBC11B10.09.1">
    <property type="protein sequence ID" value="SPBC11B10.09.1:pep"/>
    <property type="gene ID" value="SPBC11B10.09"/>
</dbReference>
<dbReference type="PomBase" id="SPBC11B10.09">
    <property type="gene designation" value="cdc2"/>
</dbReference>
<dbReference type="VEuPathDB" id="FungiDB:SPBC11B10.09"/>
<dbReference type="eggNOG" id="KOG0594">
    <property type="taxonomic scope" value="Eukaryota"/>
</dbReference>
<dbReference type="HOGENOM" id="CLU_000288_181_1_1"/>
<dbReference type="InParanoid" id="P04551"/>
<dbReference type="OMA" id="YLYQITR"/>
<dbReference type="PhylomeDB" id="P04551"/>
<dbReference type="BRENDA" id="2.7.11.22">
    <property type="organism ID" value="5613"/>
</dbReference>
<dbReference type="Reactome" id="R-SPO-176187">
    <property type="pathway name" value="Activation of ATR in response to replication stress"/>
</dbReference>
<dbReference type="Reactome" id="R-SPO-3214858">
    <property type="pathway name" value="RMTs methylate histone arginines"/>
</dbReference>
<dbReference type="Reactome" id="R-SPO-5693607">
    <property type="pathway name" value="Processing of DNA double-strand break ends"/>
</dbReference>
<dbReference type="Reactome" id="R-SPO-68949">
    <property type="pathway name" value="Orc1 removal from chromatin"/>
</dbReference>
<dbReference type="Reactome" id="R-SPO-68962">
    <property type="pathway name" value="Activation of the pre-replicative complex"/>
</dbReference>
<dbReference type="Reactome" id="R-SPO-69017">
    <property type="pathway name" value="CDK-mediated phosphorylation and removal of Cdc6"/>
</dbReference>
<dbReference type="Reactome" id="R-SPO-69231">
    <property type="pathway name" value="Cyclin D associated events in G1"/>
</dbReference>
<dbReference type="Reactome" id="R-SPO-69656">
    <property type="pathway name" value="Cyclin A:Cdk2-associated events at S phase entry"/>
</dbReference>
<dbReference type="Reactome" id="R-SPO-75815">
    <property type="pathway name" value="Ubiquitin-dependent degradation of Cyclin D"/>
</dbReference>
<dbReference type="Reactome" id="R-SPO-9754119">
    <property type="pathway name" value="Drug-mediated inhibition of CDK4/CDK6 activity"/>
</dbReference>
<dbReference type="SABIO-RK" id="P04551"/>
<dbReference type="PRO" id="PR:P04551"/>
<dbReference type="Proteomes" id="UP000002485">
    <property type="component" value="Chromosome II"/>
</dbReference>
<dbReference type="GO" id="GO:0000785">
    <property type="term" value="C:chromatin"/>
    <property type="evidence" value="ECO:0000314"/>
    <property type="project" value="PomBase"/>
</dbReference>
<dbReference type="GO" id="GO:0140445">
    <property type="term" value="C:chromosome, telomeric repeat region"/>
    <property type="evidence" value="ECO:0000269"/>
    <property type="project" value="PomBase"/>
</dbReference>
<dbReference type="GO" id="GO:0000307">
    <property type="term" value="C:cyclin-dependent protein kinase holoenzyme complex"/>
    <property type="evidence" value="ECO:0000314"/>
    <property type="project" value="PomBase"/>
</dbReference>
<dbReference type="GO" id="GO:0005737">
    <property type="term" value="C:cytoplasm"/>
    <property type="evidence" value="ECO:0000269"/>
    <property type="project" value="PomBase"/>
</dbReference>
<dbReference type="GO" id="GO:0000776">
    <property type="term" value="C:kinetochore"/>
    <property type="evidence" value="ECO:0000269"/>
    <property type="project" value="PomBase"/>
</dbReference>
<dbReference type="GO" id="GO:0072687">
    <property type="term" value="C:meiotic spindle"/>
    <property type="evidence" value="ECO:0000314"/>
    <property type="project" value="PomBase"/>
</dbReference>
<dbReference type="GO" id="GO:0035974">
    <property type="term" value="C:meiotic spindle pole body"/>
    <property type="evidence" value="ECO:0000269"/>
    <property type="project" value="PomBase"/>
</dbReference>
<dbReference type="GO" id="GO:0072686">
    <property type="term" value="C:mitotic spindle"/>
    <property type="evidence" value="ECO:0000269"/>
    <property type="project" value="PomBase"/>
</dbReference>
<dbReference type="GO" id="GO:1990023">
    <property type="term" value="C:mitotic spindle midzone"/>
    <property type="evidence" value="ECO:0000314"/>
    <property type="project" value="PomBase"/>
</dbReference>
<dbReference type="GO" id="GO:0044732">
    <property type="term" value="C:mitotic spindle pole body"/>
    <property type="evidence" value="ECO:0000269"/>
    <property type="project" value="PomBase"/>
</dbReference>
<dbReference type="GO" id="GO:0071958">
    <property type="term" value="C:new mitotic spindle pole body"/>
    <property type="evidence" value="ECO:0000314"/>
    <property type="project" value="PomBase"/>
</dbReference>
<dbReference type="GO" id="GO:0140602">
    <property type="term" value="C:nucleolar peripheral inclusion body"/>
    <property type="evidence" value="ECO:0000314"/>
    <property type="project" value="PomBase"/>
</dbReference>
<dbReference type="GO" id="GO:0005634">
    <property type="term" value="C:nucleus"/>
    <property type="evidence" value="ECO:0000314"/>
    <property type="project" value="PomBase"/>
</dbReference>
<dbReference type="GO" id="GO:0071957">
    <property type="term" value="C:old mitotic spindle pole body"/>
    <property type="evidence" value="ECO:0000314"/>
    <property type="project" value="PomBase"/>
</dbReference>
<dbReference type="GO" id="GO:0005524">
    <property type="term" value="F:ATP binding"/>
    <property type="evidence" value="ECO:0007669"/>
    <property type="project" value="UniProtKB-KW"/>
</dbReference>
<dbReference type="GO" id="GO:0030332">
    <property type="term" value="F:cyclin binding"/>
    <property type="evidence" value="ECO:0000318"/>
    <property type="project" value="GO_Central"/>
</dbReference>
<dbReference type="GO" id="GO:0097472">
    <property type="term" value="F:cyclin-dependent protein kinase activity"/>
    <property type="evidence" value="ECO:0000314"/>
    <property type="project" value="PomBase"/>
</dbReference>
<dbReference type="GO" id="GO:0004693">
    <property type="term" value="F:cyclin-dependent protein serine/threonine kinase activity"/>
    <property type="evidence" value="ECO:0000314"/>
    <property type="project" value="PomBase"/>
</dbReference>
<dbReference type="GO" id="GO:0004672">
    <property type="term" value="F:protein kinase activity"/>
    <property type="evidence" value="ECO:0000314"/>
    <property type="project" value="PomBase"/>
</dbReference>
<dbReference type="GO" id="GO:0106310">
    <property type="term" value="F:protein serine kinase activity"/>
    <property type="evidence" value="ECO:0007669"/>
    <property type="project" value="RHEA"/>
</dbReference>
<dbReference type="GO" id="GO:0004674">
    <property type="term" value="F:protein serine/threonine kinase activity"/>
    <property type="evidence" value="ECO:0000314"/>
    <property type="project" value="PomBase"/>
</dbReference>
<dbReference type="GO" id="GO:0051301">
    <property type="term" value="P:cell division"/>
    <property type="evidence" value="ECO:0007669"/>
    <property type="project" value="UniProtKB-KW"/>
</dbReference>
<dbReference type="GO" id="GO:0000082">
    <property type="term" value="P:G1/S transition of mitotic cell cycle"/>
    <property type="evidence" value="ECO:0000315"/>
    <property type="project" value="PomBase"/>
</dbReference>
<dbReference type="GO" id="GO:0000086">
    <property type="term" value="P:G2/M transition of mitotic cell cycle"/>
    <property type="evidence" value="ECO:0000315"/>
    <property type="project" value="PomBase"/>
</dbReference>
<dbReference type="GO" id="GO:0044773">
    <property type="term" value="P:mitotic DNA damage checkpoint signaling"/>
    <property type="evidence" value="ECO:0000269"/>
    <property type="project" value="PomBase"/>
</dbReference>
<dbReference type="GO" id="GO:0031568">
    <property type="term" value="P:mitotic G1 cell size control checkpoint signaling"/>
    <property type="evidence" value="ECO:0000315"/>
    <property type="project" value="PomBase"/>
</dbReference>
<dbReference type="GO" id="GO:0031573">
    <property type="term" value="P:mitotic intra-S DNA damage checkpoint signaling"/>
    <property type="evidence" value="ECO:0000315"/>
    <property type="project" value="PomBase"/>
</dbReference>
<dbReference type="GO" id="GO:1905785">
    <property type="term" value="P:negative regulation of anaphase-promoting complex-dependent catabolic process"/>
    <property type="evidence" value="ECO:0000315"/>
    <property type="project" value="PomBase"/>
</dbReference>
<dbReference type="GO" id="GO:1902424">
    <property type="term" value="P:negative regulation of attachment of mitotic spindle microtubules to kinetochore"/>
    <property type="evidence" value="ECO:0000315"/>
    <property type="project" value="PomBase"/>
</dbReference>
<dbReference type="GO" id="GO:0110045">
    <property type="term" value="P:negative regulation of cell cycle switching, mitotic to meiotic cell cycle"/>
    <property type="evidence" value="ECO:0000315"/>
    <property type="project" value="PomBase"/>
</dbReference>
<dbReference type="GO" id="GO:0031138">
    <property type="term" value="P:negative regulation of conjugation with cellular fusion"/>
    <property type="evidence" value="ECO:0000315"/>
    <property type="project" value="PomBase"/>
</dbReference>
<dbReference type="GO" id="GO:2001033">
    <property type="term" value="P:negative regulation of double-strand break repair via nonhomologous end joining"/>
    <property type="evidence" value="ECO:0000315"/>
    <property type="project" value="PomBase"/>
</dbReference>
<dbReference type="GO" id="GO:0001100">
    <property type="term" value="P:negative regulation of exit from mitosis"/>
    <property type="evidence" value="ECO:0000269"/>
    <property type="project" value="PomBase"/>
</dbReference>
<dbReference type="GO" id="GO:1903500">
    <property type="term" value="P:negative regulation of mitotic actomyosin contractile ring assembly"/>
    <property type="evidence" value="ECO:0000315"/>
    <property type="project" value="PomBase"/>
</dbReference>
<dbReference type="GO" id="GO:1902413">
    <property type="term" value="P:negative regulation of mitotic cytokinesis"/>
    <property type="evidence" value="ECO:0000269"/>
    <property type="project" value="PomBase"/>
</dbReference>
<dbReference type="GO" id="GO:1903467">
    <property type="term" value="P:negative regulation of mitotic DNA replication initiation"/>
    <property type="evidence" value="ECO:0000315"/>
    <property type="project" value="PomBase"/>
</dbReference>
<dbReference type="GO" id="GO:1902845">
    <property type="term" value="P:negative regulation of mitotic spindle elongation"/>
    <property type="evidence" value="ECO:0000315"/>
    <property type="project" value="PomBase"/>
</dbReference>
<dbReference type="GO" id="GO:1904537">
    <property type="term" value="P:negative regulation of mitotic telomere tethering at nuclear periphery"/>
    <property type="evidence" value="ECO:0000353"/>
    <property type="project" value="PomBase"/>
</dbReference>
<dbReference type="GO" id="GO:1905757">
    <property type="term" value="P:negative regulation of primary cell septum biogenesis"/>
    <property type="evidence" value="ECO:0000315"/>
    <property type="project" value="PomBase"/>
</dbReference>
<dbReference type="GO" id="GO:0031536">
    <property type="term" value="P:positive regulation of exit from mitosis"/>
    <property type="evidence" value="ECO:0000315"/>
    <property type="project" value="PomBase"/>
</dbReference>
<dbReference type="GO" id="GO:1900087">
    <property type="term" value="P:positive regulation of G1/S transition of mitotic cell cycle"/>
    <property type="evidence" value="ECO:0000315"/>
    <property type="project" value="PomBase"/>
</dbReference>
<dbReference type="GO" id="GO:1904514">
    <property type="term" value="P:positive regulation of initiation of premeiotic DNA replication"/>
    <property type="evidence" value="ECO:0000315"/>
    <property type="project" value="PomBase"/>
</dbReference>
<dbReference type="GO" id="GO:1905561">
    <property type="term" value="P:positive regulation of kinetochore assembly"/>
    <property type="evidence" value="ECO:0000269"/>
    <property type="project" value="PomBase"/>
</dbReference>
<dbReference type="GO" id="GO:0051446">
    <property type="term" value="P:positive regulation of meiotic cell cycle"/>
    <property type="evidence" value="ECO:0000315"/>
    <property type="project" value="PomBase"/>
</dbReference>
<dbReference type="GO" id="GO:1905263">
    <property type="term" value="P:positive regulation of meiotic DNA double-strand break formation involved in reciprocal meiotic recombination"/>
    <property type="evidence" value="ECO:0000315"/>
    <property type="project" value="PomBase"/>
</dbReference>
<dbReference type="GO" id="GO:1903465">
    <property type="term" value="P:positive regulation of mitotic cell cycle DNA replication"/>
    <property type="evidence" value="ECO:0000269"/>
    <property type="project" value="PomBase"/>
</dbReference>
<dbReference type="GO" id="GO:1903380">
    <property type="term" value="P:positive regulation of mitotic chromosome condensation"/>
    <property type="evidence" value="ECO:0000315"/>
    <property type="project" value="PomBase"/>
</dbReference>
<dbReference type="GO" id="GO:0045842">
    <property type="term" value="P:positive regulation of mitotic metaphase/anaphase transition"/>
    <property type="evidence" value="ECO:0000315"/>
    <property type="project" value="PomBase"/>
</dbReference>
<dbReference type="GO" id="GO:0140429">
    <property type="term" value="P:positive regulation of mitotic sister chromatid biorientation"/>
    <property type="evidence" value="ECO:0000315"/>
    <property type="project" value="PomBase"/>
</dbReference>
<dbReference type="GO" id="GO:0032436">
    <property type="term" value="P:positive regulation of proteasomal ubiquitin-dependent protein catabolic process"/>
    <property type="evidence" value="ECO:0000315"/>
    <property type="project" value="PomBase"/>
</dbReference>
<dbReference type="GO" id="GO:0045732">
    <property type="term" value="P:positive regulation of protein catabolic process"/>
    <property type="evidence" value="ECO:0000269"/>
    <property type="project" value="PomBase"/>
</dbReference>
<dbReference type="GO" id="GO:0042307">
    <property type="term" value="P:positive regulation of protein import into nucleus"/>
    <property type="evidence" value="ECO:0000315"/>
    <property type="project" value="PomBase"/>
</dbReference>
<dbReference type="GO" id="GO:0031031">
    <property type="term" value="P:positive regulation of septation initiation signaling"/>
    <property type="evidence" value="ECO:0000315"/>
    <property type="project" value="PomBase"/>
</dbReference>
<dbReference type="GO" id="GO:0110044">
    <property type="term" value="P:regulation of cell cycle switching, mitotic to meiotic cell cycle"/>
    <property type="evidence" value="ECO:0000314"/>
    <property type="project" value="PomBase"/>
</dbReference>
<dbReference type="GO" id="GO:1904547">
    <property type="term" value="P:regulation of cellular response to glucose starvation"/>
    <property type="evidence" value="ECO:0000315"/>
    <property type="project" value="PomBase"/>
</dbReference>
<dbReference type="GO" id="GO:2000099">
    <property type="term" value="P:regulation of establishment or maintenance of bipolar cell polarity"/>
    <property type="evidence" value="ECO:0000314"/>
    <property type="project" value="PomBase"/>
</dbReference>
<dbReference type="GO" id="GO:0010389">
    <property type="term" value="P:regulation of G2/M transition of mitotic cell cycle"/>
    <property type="evidence" value="ECO:0000318"/>
    <property type="project" value="GO_Central"/>
</dbReference>
<dbReference type="GO" id="GO:0010468">
    <property type="term" value="P:regulation of gene expression"/>
    <property type="evidence" value="ECO:0000318"/>
    <property type="project" value="GO_Central"/>
</dbReference>
<dbReference type="GO" id="GO:0062123">
    <property type="term" value="P:regulation of linear element maturation"/>
    <property type="evidence" value="ECO:0000315"/>
    <property type="project" value="PomBase"/>
</dbReference>
<dbReference type="GO" id="GO:0072441">
    <property type="term" value="P:response to meiotic DNA replication checkpoint signaling"/>
    <property type="evidence" value="ECO:0000269"/>
    <property type="project" value="PomBase"/>
</dbReference>
<dbReference type="GO" id="GO:1990820">
    <property type="term" value="P:response to mitotic DNA integrity checkpoint signaling"/>
    <property type="evidence" value="ECO:0000316"/>
    <property type="project" value="PomBase"/>
</dbReference>
<dbReference type="GO" id="GO:0072435">
    <property type="term" value="P:response to mitotic G2 DNA damage checkpoint signaling"/>
    <property type="evidence" value="ECO:0000315"/>
    <property type="project" value="PomBase"/>
</dbReference>
<dbReference type="GO" id="GO:0007165">
    <property type="term" value="P:signal transduction"/>
    <property type="evidence" value="ECO:0000318"/>
    <property type="project" value="GO_Central"/>
</dbReference>
<dbReference type="CDD" id="cd07835">
    <property type="entry name" value="STKc_CDK1_CdkB_like"/>
    <property type="match status" value="1"/>
</dbReference>
<dbReference type="FunFam" id="1.10.510.10:FF:000281">
    <property type="entry name" value="Cyclin-dependent kinase 2"/>
    <property type="match status" value="1"/>
</dbReference>
<dbReference type="FunFam" id="3.30.200.20:FF:000215">
    <property type="entry name" value="Cyclin-dependent kinase 2 (CDK2L)"/>
    <property type="match status" value="1"/>
</dbReference>
<dbReference type="Gene3D" id="3.30.200.20">
    <property type="entry name" value="Phosphorylase Kinase, domain 1"/>
    <property type="match status" value="1"/>
</dbReference>
<dbReference type="Gene3D" id="1.10.510.10">
    <property type="entry name" value="Transferase(Phosphotransferase) domain 1"/>
    <property type="match status" value="1"/>
</dbReference>
<dbReference type="InterPro" id="IPR050108">
    <property type="entry name" value="CDK"/>
</dbReference>
<dbReference type="InterPro" id="IPR011009">
    <property type="entry name" value="Kinase-like_dom_sf"/>
</dbReference>
<dbReference type="InterPro" id="IPR000719">
    <property type="entry name" value="Prot_kinase_dom"/>
</dbReference>
<dbReference type="InterPro" id="IPR017441">
    <property type="entry name" value="Protein_kinase_ATP_BS"/>
</dbReference>
<dbReference type="InterPro" id="IPR008271">
    <property type="entry name" value="Ser/Thr_kinase_AS"/>
</dbReference>
<dbReference type="PANTHER" id="PTHR24056">
    <property type="entry name" value="CELL DIVISION PROTEIN KINASE"/>
    <property type="match status" value="1"/>
</dbReference>
<dbReference type="PANTHER" id="PTHR24056:SF254">
    <property type="entry name" value="CYCLIN-DEPENDENT KINASE 2"/>
    <property type="match status" value="1"/>
</dbReference>
<dbReference type="Pfam" id="PF00069">
    <property type="entry name" value="Pkinase"/>
    <property type="match status" value="1"/>
</dbReference>
<dbReference type="SMART" id="SM00220">
    <property type="entry name" value="S_TKc"/>
    <property type="match status" value="1"/>
</dbReference>
<dbReference type="SUPFAM" id="SSF56112">
    <property type="entry name" value="Protein kinase-like (PK-like)"/>
    <property type="match status" value="1"/>
</dbReference>
<dbReference type="PROSITE" id="PS00107">
    <property type="entry name" value="PROTEIN_KINASE_ATP"/>
    <property type="match status" value="1"/>
</dbReference>
<dbReference type="PROSITE" id="PS50011">
    <property type="entry name" value="PROTEIN_KINASE_DOM"/>
    <property type="match status" value="1"/>
</dbReference>
<dbReference type="PROSITE" id="PS00108">
    <property type="entry name" value="PROTEIN_KINASE_ST"/>
    <property type="match status" value="1"/>
</dbReference>
<evidence type="ECO:0000250" key="1"/>
<evidence type="ECO:0000250" key="2">
    <source>
        <dbReference type="UniProtKB" id="P00546"/>
    </source>
</evidence>
<evidence type="ECO:0000250" key="3">
    <source>
        <dbReference type="UniProtKB" id="P06493"/>
    </source>
</evidence>
<evidence type="ECO:0000250" key="4">
    <source>
        <dbReference type="UniProtKB" id="P24941"/>
    </source>
</evidence>
<evidence type="ECO:0000255" key="5">
    <source>
        <dbReference type="PROSITE-ProRule" id="PRU00159"/>
    </source>
</evidence>
<evidence type="ECO:0000255" key="6">
    <source>
        <dbReference type="PROSITE-ProRule" id="PRU10027"/>
    </source>
</evidence>
<evidence type="ECO:0000269" key="7">
    <source>
    </source>
</evidence>
<evidence type="ECO:0000269" key="8">
    <source>
    </source>
</evidence>
<evidence type="ECO:0000269" key="9">
    <source>
    </source>
</evidence>
<evidence type="ECO:0000269" key="10">
    <source>
    </source>
</evidence>
<evidence type="ECO:0000269" key="11">
    <source>
    </source>
</evidence>
<evidence type="ECO:0000269" key="12">
    <source>
    </source>
</evidence>
<evidence type="ECO:0000269" key="13">
    <source>
    </source>
</evidence>
<evidence type="ECO:0000269" key="14">
    <source>
    </source>
</evidence>
<evidence type="ECO:0000269" key="15">
    <source>
    </source>
</evidence>
<evidence type="ECO:0000269" key="16">
    <source>
    </source>
</evidence>
<evidence type="ECO:0000269" key="17">
    <source>
    </source>
</evidence>
<evidence type="ECO:0000269" key="18">
    <source>
    </source>
</evidence>
<evidence type="ECO:0000269" key="19">
    <source>
    </source>
</evidence>
<evidence type="ECO:0000269" key="20">
    <source>
    </source>
</evidence>
<evidence type="ECO:0000269" key="21">
    <source>
    </source>
</evidence>
<evidence type="ECO:0000269" key="22">
    <source>
    </source>
</evidence>
<evidence type="ECO:0000269" key="23">
    <source>
    </source>
</evidence>
<evidence type="ECO:0000269" key="24">
    <source>
    </source>
</evidence>
<evidence type="ECO:0000269" key="25">
    <source>
    </source>
</evidence>
<evidence type="ECO:0000269" key="26">
    <source ref="6"/>
</evidence>
<evidence type="ECO:0000303" key="27">
    <source>
    </source>
</evidence>
<evidence type="ECO:0000303" key="28">
    <source>
    </source>
</evidence>
<evidence type="ECO:0000305" key="29"/>
<evidence type="ECO:0000305" key="30">
    <source>
    </source>
</evidence>
<sequence>MENYQKVEKIGEGTYGVVYKARHKLSGRIVAMKKIRLEDESEGVPSTAIREISLLKEVNDENNRSNCVRLLDILHAESKLYLVFEFLDMDLKKYMDRISETGATSLDPRLVQKFTYQLVNGVNFCHSRRIIHRDLKPQNLLIDKEGNLKLADFGLARSFGVPLRNYTHEIVTLWYRAPEVLLGSRHYSTGVDIWSVGCIFAEMIRRSPLFPGDSEIDEIFKIFQVLGTPNEEVWPGVTLLQDYKSTFPRWKRMDLHKVVPNGEEDAIELLSAMLVYDPAHRISAKRALQQNYLRDFH</sequence>
<gene>
    <name evidence="27" type="primary">cdc2</name>
    <name type="synonym">cdk1</name>
    <name type="synonym">swo2</name>
    <name evidence="28" type="synonym">tws1</name>
    <name type="ORF">pi002</name>
    <name type="ORF">SPBC11B10.09</name>
</gene>
<proteinExistence type="evidence at protein level"/>
<comment type="function">
    <text evidence="9 12 14 15 17 20 21 22 25 26 30">Cyclin-dependent kinase that acts as a master regulator of the mitotic and meiotic cell cycles (PubMed:1896017, PubMed:2274045, PubMed:6581157, PubMed:7498766, PubMed:8087848, PubMed:9042863, Ref.6). Required to drive the G1-S and G2-M transitions, and initiation of premeiotic DNA replication and meiosis II (PubMed:1896017, PubMed:2274045, PubMed:6581157, PubMed:7498766, PubMed:8087848, PubMed:9042863, Ref.6). More than 200 substrates have been identified (PubMed:27984725). Substrate specificity is in part regulated by the bound cyclin protein (PubMed:27984725). When complexed with cyclin cig2, it drives the G1-S phase transition (PubMed:8087848). When complexed with cyclin cdc13, it drives the G2-M transition and initiation of meiosis II (PubMed:7498766, PubMed:8087848). Its activity rises throughout the cell cycle and substrate specificity is further influenced by activity thresholds with more sensitive substrates phosphorylated earlier in the cell cycle than less sensitive substrates (PubMed:27984725). Phosphorylates dis1 during metaphase to ensure proper microtubule dynamics and accurate chromosome segregation (PubMed:16920624). Phosphorylates the repetitive C-terminus of the large subunit of RNA polymerase II rpb1 (Probable). Inactivated by checkpoint signaling following detection of cellular damage, leading to cell cycle arrest to allow damage repair (PubMed:16049013, PubMed:9042863). Inactivated during G2 DNA damage checkpoint signaling (PubMed:9042863). Inactivated in response to defective RNA splicing (PubMed:16049013).</text>
</comment>
<comment type="catalytic activity">
    <reaction evidence="4">
        <text>L-seryl-[protein] + ATP = O-phospho-L-seryl-[protein] + ADP + H(+)</text>
        <dbReference type="Rhea" id="RHEA:17989"/>
        <dbReference type="Rhea" id="RHEA-COMP:9863"/>
        <dbReference type="Rhea" id="RHEA-COMP:11604"/>
        <dbReference type="ChEBI" id="CHEBI:15378"/>
        <dbReference type="ChEBI" id="CHEBI:29999"/>
        <dbReference type="ChEBI" id="CHEBI:30616"/>
        <dbReference type="ChEBI" id="CHEBI:83421"/>
        <dbReference type="ChEBI" id="CHEBI:456216"/>
        <dbReference type="EC" id="2.7.11.22"/>
    </reaction>
</comment>
<comment type="catalytic activity">
    <reaction evidence="8">
        <text>L-threonyl-[protein] + ATP = O-phospho-L-threonyl-[protein] + ADP + H(+)</text>
        <dbReference type="Rhea" id="RHEA:46608"/>
        <dbReference type="Rhea" id="RHEA-COMP:11060"/>
        <dbReference type="Rhea" id="RHEA-COMP:11605"/>
        <dbReference type="ChEBI" id="CHEBI:15378"/>
        <dbReference type="ChEBI" id="CHEBI:30013"/>
        <dbReference type="ChEBI" id="CHEBI:30616"/>
        <dbReference type="ChEBI" id="CHEBI:61977"/>
        <dbReference type="ChEBI" id="CHEBI:456216"/>
        <dbReference type="EC" id="2.7.11.22"/>
    </reaction>
</comment>
<comment type="activity regulation">
    <text evidence="3">Phosphorylation at Thr-14 or Tyr-15 inactivates the enzyme, while phosphorylation at Thr-167 activates it.</text>
</comment>
<comment type="subunit">
    <text evidence="7 10 18 24">Forms a stable but non-covalent complex with regulatory subunit suc1 and with a cyclin (PubMed:3322810). Interacts with cyclin cdc13 (PubMed:16390871). Interacts with cyclin cig2 (PubMed:11163211, PubMed:8455610). Interacts with cdc37 (PubMed:11163211, PubMed:16390871, PubMed:8455610).</text>
</comment>
<comment type="interaction">
    <interactant intactId="EBI-1187862">
        <id>P04551</id>
    </interactant>
    <interactant intactId="EBI-2028187">
        <id>Q09142</id>
        <label>orc2</label>
    </interactant>
    <organismsDiffer>false</organismsDiffer>
    <experiments>2</experiments>
</comment>
<comment type="interaction">
    <interactant intactId="EBI-1187862">
        <id>P04551</id>
    </interactant>
    <interactant intactId="EBI-443575">
        <id>O74627</id>
        <label>pch1</label>
    </interactant>
    <organismsDiffer>false</organismsDiffer>
    <experiments>2</experiments>
</comment>
<comment type="interaction">
    <interactant intactId="EBI-1187862">
        <id>P04551</id>
    </interactant>
    <interactant intactId="EBI-1187892">
        <id>P40380</id>
        <label>rum1</label>
    </interactant>
    <organismsDiffer>false</organismsDiffer>
    <experiments>2</experiments>
</comment>
<comment type="subcellular location">
    <subcellularLocation>
        <location evidence="11">Cytoplasm</location>
    </subcellularLocation>
</comment>
<comment type="similarity">
    <text evidence="29">Belongs to the protein kinase superfamily. CMGC Ser/Thr protein kinase family. CDC2/CDKX subfamily.</text>
</comment>
<protein>
    <recommendedName>
        <fullName evidence="2">Cyclin-dependent kinase 1</fullName>
        <shortName evidence="2">CDK1</shortName>
        <ecNumber evidence="8">2.7.11.22</ecNumber>
    </recommendedName>
    <alternativeName>
        <fullName>Cell division control protein 2</fullName>
    </alternativeName>
    <alternativeName>
        <fullName>Cell division protein kinase 1</fullName>
    </alternativeName>
    <alternativeName>
        <fullName>p34 protein kinase</fullName>
    </alternativeName>
</protein>